<dbReference type="EC" id="3.4.16.6"/>
<dbReference type="EMBL" id="CH476655">
    <property type="protein sequence ID" value="EDN04128.1"/>
    <property type="molecule type" value="Genomic_DNA"/>
</dbReference>
<dbReference type="SMR" id="A6QX86"/>
<dbReference type="STRING" id="339724.A6QX86"/>
<dbReference type="ESTHER" id="ajecn-kex1">
    <property type="family name" value="Carboxypeptidase_S10"/>
</dbReference>
<dbReference type="MEROPS" id="S10.007"/>
<dbReference type="GlyCosmos" id="A6QX86">
    <property type="glycosylation" value="5 sites, No reported glycans"/>
</dbReference>
<dbReference type="KEGG" id="aje:HCAG_01993"/>
<dbReference type="VEuPathDB" id="FungiDB:HCAG_01993"/>
<dbReference type="HOGENOM" id="CLU_008523_11_0_1"/>
<dbReference type="OMA" id="EMADQFV"/>
<dbReference type="OrthoDB" id="5679at299071"/>
<dbReference type="Proteomes" id="UP000009297">
    <property type="component" value="Unassembled WGS sequence"/>
</dbReference>
<dbReference type="GO" id="GO:0016020">
    <property type="term" value="C:membrane"/>
    <property type="evidence" value="ECO:0007669"/>
    <property type="project" value="UniProtKB-KW"/>
</dbReference>
<dbReference type="GO" id="GO:0005802">
    <property type="term" value="C:trans-Golgi network"/>
    <property type="evidence" value="ECO:0007669"/>
    <property type="project" value="TreeGrafter"/>
</dbReference>
<dbReference type="GO" id="GO:0004185">
    <property type="term" value="F:serine-type carboxypeptidase activity"/>
    <property type="evidence" value="ECO:0007669"/>
    <property type="project" value="UniProtKB-EC"/>
</dbReference>
<dbReference type="GO" id="GO:0006915">
    <property type="term" value="P:apoptotic process"/>
    <property type="evidence" value="ECO:0007669"/>
    <property type="project" value="UniProtKB-KW"/>
</dbReference>
<dbReference type="GO" id="GO:0006508">
    <property type="term" value="P:proteolysis"/>
    <property type="evidence" value="ECO:0007669"/>
    <property type="project" value="UniProtKB-KW"/>
</dbReference>
<dbReference type="FunFam" id="3.40.50.1820:FF:000121">
    <property type="entry name" value="Carboxypeptidase D"/>
    <property type="match status" value="1"/>
</dbReference>
<dbReference type="Gene3D" id="3.40.50.1820">
    <property type="entry name" value="alpha/beta hydrolase"/>
    <property type="match status" value="1"/>
</dbReference>
<dbReference type="InterPro" id="IPR029058">
    <property type="entry name" value="AB_hydrolase_fold"/>
</dbReference>
<dbReference type="InterPro" id="IPR001563">
    <property type="entry name" value="Peptidase_S10"/>
</dbReference>
<dbReference type="PANTHER" id="PTHR11802:SF190">
    <property type="entry name" value="PHEROMONE-PROCESSING CARBOXYPEPTIDASE KEX1"/>
    <property type="match status" value="1"/>
</dbReference>
<dbReference type="PANTHER" id="PTHR11802">
    <property type="entry name" value="SERINE PROTEASE FAMILY S10 SERINE CARBOXYPEPTIDASE"/>
    <property type="match status" value="1"/>
</dbReference>
<dbReference type="Pfam" id="PF00450">
    <property type="entry name" value="Peptidase_S10"/>
    <property type="match status" value="1"/>
</dbReference>
<dbReference type="PRINTS" id="PR00724">
    <property type="entry name" value="CRBOXYPTASEC"/>
</dbReference>
<dbReference type="SUPFAM" id="SSF53474">
    <property type="entry name" value="alpha/beta-Hydrolases"/>
    <property type="match status" value="1"/>
</dbReference>
<proteinExistence type="inferred from homology"/>
<feature type="signal peptide" evidence="2">
    <location>
        <begin position="1"/>
        <end position="33"/>
    </location>
</feature>
<feature type="chain" id="PRO_0000411896" description="Pheromone-processing carboxypeptidase KEX1">
    <location>
        <begin position="34"/>
        <end position="634"/>
    </location>
</feature>
<feature type="topological domain" description="Lumenal" evidence="2">
    <location>
        <begin position="34"/>
        <end position="517"/>
    </location>
</feature>
<feature type="transmembrane region" description="Helical" evidence="2">
    <location>
        <begin position="518"/>
        <end position="538"/>
    </location>
</feature>
<feature type="topological domain" description="Cytoplasmic" evidence="2">
    <location>
        <begin position="539"/>
        <end position="634"/>
    </location>
</feature>
<feature type="region of interest" description="Disordered" evidence="3">
    <location>
        <begin position="475"/>
        <end position="502"/>
    </location>
</feature>
<feature type="region of interest" description="Disordered" evidence="3">
    <location>
        <begin position="592"/>
        <end position="634"/>
    </location>
</feature>
<feature type="compositionally biased region" description="Acidic residues" evidence="3">
    <location>
        <begin position="612"/>
        <end position="624"/>
    </location>
</feature>
<feature type="compositionally biased region" description="Basic and acidic residues" evidence="3">
    <location>
        <begin position="625"/>
        <end position="634"/>
    </location>
</feature>
<feature type="active site" evidence="1">
    <location>
        <position position="185"/>
    </location>
</feature>
<feature type="active site" evidence="1">
    <location>
        <position position="384"/>
    </location>
</feature>
<feature type="active site" evidence="1">
    <location>
        <position position="446"/>
    </location>
</feature>
<feature type="glycosylation site" description="N-linked (GlcNAc...) asparagine" evidence="2">
    <location>
        <position position="118"/>
    </location>
</feature>
<feature type="glycosylation site" description="N-linked (GlcNAc...) asparagine" evidence="2">
    <location>
        <position position="328"/>
    </location>
</feature>
<feature type="glycosylation site" description="N-linked (GlcNAc...) asparagine" evidence="2">
    <location>
        <position position="435"/>
    </location>
</feature>
<feature type="glycosylation site" description="N-linked (GlcNAc...) asparagine" evidence="2">
    <location>
        <position position="443"/>
    </location>
</feature>
<feature type="glycosylation site" description="N-linked (GlcNAc...) asparagine" evidence="2">
    <location>
        <position position="495"/>
    </location>
</feature>
<protein>
    <recommendedName>
        <fullName>Pheromone-processing carboxypeptidase KEX1</fullName>
        <ecNumber>3.4.16.6</ecNumber>
    </recommendedName>
    <alternativeName>
        <fullName>Carboxypeptidase D</fullName>
    </alternativeName>
</protein>
<gene>
    <name type="primary">KEX1</name>
    <name type="ORF">HCAG_01993</name>
</gene>
<keyword id="KW-0053">Apoptosis</keyword>
<keyword id="KW-0121">Carboxypeptidase</keyword>
<keyword id="KW-0325">Glycoprotein</keyword>
<keyword id="KW-0333">Golgi apparatus</keyword>
<keyword id="KW-0378">Hydrolase</keyword>
<keyword id="KW-0472">Membrane</keyword>
<keyword id="KW-0645">Protease</keyword>
<keyword id="KW-1185">Reference proteome</keyword>
<keyword id="KW-0732">Signal</keyword>
<keyword id="KW-0812">Transmembrane</keyword>
<keyword id="KW-1133">Transmembrane helix</keyword>
<accession>A6QX86</accession>
<reference key="1">
    <citation type="journal article" date="2009" name="Genome Res.">
        <title>Comparative genomic analyses of the human fungal pathogens Coccidioides and their relatives.</title>
        <authorList>
            <person name="Sharpton T.J."/>
            <person name="Stajich J.E."/>
            <person name="Rounsley S.D."/>
            <person name="Gardner M.J."/>
            <person name="Wortman J.R."/>
            <person name="Jordar V.S."/>
            <person name="Maiti R."/>
            <person name="Kodira C.D."/>
            <person name="Neafsey D.E."/>
            <person name="Zeng Q."/>
            <person name="Hung C.-Y."/>
            <person name="McMahan C."/>
            <person name="Muszewska A."/>
            <person name="Grynberg M."/>
            <person name="Mandel M.A."/>
            <person name="Kellner E.M."/>
            <person name="Barker B.M."/>
            <person name="Galgiani J.N."/>
            <person name="Orbach M.J."/>
            <person name="Kirkland T.N."/>
            <person name="Cole G.T."/>
            <person name="Henn M.R."/>
            <person name="Birren B.W."/>
            <person name="Taylor J.W."/>
        </authorList>
    </citation>
    <scope>NUCLEOTIDE SEQUENCE [LARGE SCALE GENOMIC DNA]</scope>
    <source>
        <strain>NAm1 / WU24</strain>
    </source>
</reference>
<organism>
    <name type="scientific">Ajellomyces capsulatus (strain NAm1 / WU24)</name>
    <name type="common">Darling's disease fungus</name>
    <name type="synonym">Histoplasma capsulatum</name>
    <dbReference type="NCBI Taxonomy" id="2059318"/>
    <lineage>
        <taxon>Eukaryota</taxon>
        <taxon>Fungi</taxon>
        <taxon>Dikarya</taxon>
        <taxon>Ascomycota</taxon>
        <taxon>Pezizomycotina</taxon>
        <taxon>Eurotiomycetes</taxon>
        <taxon>Eurotiomycetidae</taxon>
        <taxon>Onygenales</taxon>
        <taxon>Ajellomycetaceae</taxon>
        <taxon>Histoplasma</taxon>
    </lineage>
</organism>
<comment type="function">
    <text evidence="1">Protease with a carboxypeptidase B-like function involved in the C-terminal processing of the lysine and arginine residues from protein precursors. Promotes cell fusion and is involved in the programmed cell death (By similarity).</text>
</comment>
<comment type="catalytic activity">
    <reaction>
        <text>Preferential release of a C-terminal arginine or lysine residue.</text>
        <dbReference type="EC" id="3.4.16.6"/>
    </reaction>
</comment>
<comment type="subcellular location">
    <subcellularLocation>
        <location evidence="1">Golgi apparatus</location>
        <location evidence="1">trans-Golgi network membrane</location>
        <topology evidence="1">Single-pass type I membrane protein</topology>
    </subcellularLocation>
</comment>
<comment type="similarity">
    <text evidence="4">Belongs to the peptidase S10 family.</text>
</comment>
<name>KEX1_AJECN</name>
<sequence>MGFSEARAYRAFGGRSTWLTVFLALANSLAVSAKCAADYFVDSLPGQPDSPQVQMHAGHIEINHKTSANLFFWHVANQHIADKPRTVIWLNGGPGCSSEDGALMEIGPYRVTNDHLLNHTDGSWDEFANLLFVDQPVGTGFSYVSTGAYVSELGEMASQFVTFLEKWFELFPHYEKNDLYFAGESYAGQYIPYIARAILDRNKKGESLTRWKLKGILIGNGWISPRHQYLSYLPYAYQEGIIQGGTDSSSRVEAKLSKCLNKLNVEDSTGTVQISACEEVLQAIIDETHKGNRCINMYDIRLTDEYSACGMNWPPDLENMAPYLRFKNVTKALHINSDKQTGWSECSGAVSGHFRALKSKPSVELLPGLLEEGLPILLFSGQKDMICNHIGNEDLIKDMKWSGGTGFELSPGVWAPRQDWIFEGESAGFYQQARNLTYVLFYNASHMVPFNYPPRSREMLDRFIGVDIADIGGNPADSRIDGEKGPATSVRAHPNSTAAAEREKEKVKSAMWKAYYKSGEVALIVVAIAAVIWGVFIWRSRQKHQDRGYEFRGIYPMLGSSSSGSLPRYSNKRGRRGHDVEAVNIYEAELDERPSRVVSARSSREQEPYVVGDEDGSDVDDDTSDERKRLVDKP</sequence>
<evidence type="ECO:0000250" key="1"/>
<evidence type="ECO:0000255" key="2"/>
<evidence type="ECO:0000256" key="3">
    <source>
        <dbReference type="SAM" id="MobiDB-lite"/>
    </source>
</evidence>
<evidence type="ECO:0000305" key="4"/>